<name>H2AV1_DICDI</name>
<reference key="1">
    <citation type="journal article" date="2005" name="Nature">
        <title>The genome of the social amoeba Dictyostelium discoideum.</title>
        <authorList>
            <person name="Eichinger L."/>
            <person name="Pachebat J.A."/>
            <person name="Gloeckner G."/>
            <person name="Rajandream M.A."/>
            <person name="Sucgang R."/>
            <person name="Berriman M."/>
            <person name="Song J."/>
            <person name="Olsen R."/>
            <person name="Szafranski K."/>
            <person name="Xu Q."/>
            <person name="Tunggal B."/>
            <person name="Kummerfeld S."/>
            <person name="Madera M."/>
            <person name="Konfortov B.A."/>
            <person name="Rivero F."/>
            <person name="Bankier A.T."/>
            <person name="Lehmann R."/>
            <person name="Hamlin N."/>
            <person name="Davies R."/>
            <person name="Gaudet P."/>
            <person name="Fey P."/>
            <person name="Pilcher K."/>
            <person name="Chen G."/>
            <person name="Saunders D."/>
            <person name="Sodergren E.J."/>
            <person name="Davis P."/>
            <person name="Kerhornou A."/>
            <person name="Nie X."/>
            <person name="Hall N."/>
            <person name="Anjard C."/>
            <person name="Hemphill L."/>
            <person name="Bason N."/>
            <person name="Farbrother P."/>
            <person name="Desany B."/>
            <person name="Just E."/>
            <person name="Morio T."/>
            <person name="Rost R."/>
            <person name="Churcher C.M."/>
            <person name="Cooper J."/>
            <person name="Haydock S."/>
            <person name="van Driessche N."/>
            <person name="Cronin A."/>
            <person name="Goodhead I."/>
            <person name="Muzny D.M."/>
            <person name="Mourier T."/>
            <person name="Pain A."/>
            <person name="Lu M."/>
            <person name="Harper D."/>
            <person name="Lindsay R."/>
            <person name="Hauser H."/>
            <person name="James K.D."/>
            <person name="Quiles M."/>
            <person name="Madan Babu M."/>
            <person name="Saito T."/>
            <person name="Buchrieser C."/>
            <person name="Wardroper A."/>
            <person name="Felder M."/>
            <person name="Thangavelu M."/>
            <person name="Johnson D."/>
            <person name="Knights A."/>
            <person name="Loulseged H."/>
            <person name="Mungall K.L."/>
            <person name="Oliver K."/>
            <person name="Price C."/>
            <person name="Quail M.A."/>
            <person name="Urushihara H."/>
            <person name="Hernandez J."/>
            <person name="Rabbinowitsch E."/>
            <person name="Steffen D."/>
            <person name="Sanders M."/>
            <person name="Ma J."/>
            <person name="Kohara Y."/>
            <person name="Sharp S."/>
            <person name="Simmonds M.N."/>
            <person name="Spiegler S."/>
            <person name="Tivey A."/>
            <person name="Sugano S."/>
            <person name="White B."/>
            <person name="Walker D."/>
            <person name="Woodward J.R."/>
            <person name="Winckler T."/>
            <person name="Tanaka Y."/>
            <person name="Shaulsky G."/>
            <person name="Schleicher M."/>
            <person name="Weinstock G.M."/>
            <person name="Rosenthal A."/>
            <person name="Cox E.C."/>
            <person name="Chisholm R.L."/>
            <person name="Gibbs R.A."/>
            <person name="Loomis W.F."/>
            <person name="Platzer M."/>
            <person name="Kay R.R."/>
            <person name="Williams J.G."/>
            <person name="Dear P.H."/>
            <person name="Noegel A.A."/>
            <person name="Barrell B.G."/>
            <person name="Kuspa A."/>
        </authorList>
    </citation>
    <scope>NUCLEOTIDE SEQUENCE [LARGE SCALE GENOMIC DNA]</scope>
    <source>
        <strain>AX4</strain>
    </source>
</reference>
<dbReference type="EMBL" id="AAFI02000131">
    <property type="protein sequence ID" value="EAL62827.1"/>
    <property type="molecule type" value="Genomic_DNA"/>
</dbReference>
<dbReference type="RefSeq" id="XP_636327.1">
    <property type="nucleotide sequence ID" value="XM_631235.1"/>
</dbReference>
<dbReference type="SMR" id="Q54HW2"/>
<dbReference type="STRING" id="44689.Q54HW2"/>
<dbReference type="PaxDb" id="44689-DDB0220641"/>
<dbReference type="EnsemblProtists" id="EAL62827">
    <property type="protein sequence ID" value="EAL62827"/>
    <property type="gene ID" value="DDB_G0289187"/>
</dbReference>
<dbReference type="GeneID" id="8627000"/>
<dbReference type="KEGG" id="ddi:DDB_G0289187"/>
<dbReference type="dictyBase" id="DDB_G0289187">
    <property type="gene designation" value="H2Av1"/>
</dbReference>
<dbReference type="VEuPathDB" id="AmoebaDB:DDB_G0289187"/>
<dbReference type="eggNOG" id="KOG1756">
    <property type="taxonomic scope" value="Eukaryota"/>
</dbReference>
<dbReference type="HOGENOM" id="CLU_1071291_0_0_1"/>
<dbReference type="InParanoid" id="Q54HW2"/>
<dbReference type="Reactome" id="R-DDI-2299718">
    <property type="pathway name" value="Condensation of Prophase Chromosomes"/>
</dbReference>
<dbReference type="Reactome" id="R-DDI-2559580">
    <property type="pathway name" value="Oxidative Stress Induced Senescence"/>
</dbReference>
<dbReference type="Reactome" id="R-DDI-3214815">
    <property type="pathway name" value="HDACs deacetylate histones"/>
</dbReference>
<dbReference type="Reactome" id="R-DDI-3214858">
    <property type="pathway name" value="RMTs methylate histone arginines"/>
</dbReference>
<dbReference type="Reactome" id="R-DDI-427359">
    <property type="pathway name" value="SIRT1 negatively regulates rRNA expression"/>
</dbReference>
<dbReference type="Reactome" id="R-DDI-5625886">
    <property type="pathway name" value="Activated PKN1 stimulates transcription of AR (androgen receptor) regulated genes KLK2 and KLK3"/>
</dbReference>
<dbReference type="Reactome" id="R-DDI-5689880">
    <property type="pathway name" value="Ub-specific processing proteases"/>
</dbReference>
<dbReference type="Reactome" id="R-DDI-5689901">
    <property type="pathway name" value="Metalloprotease DUBs"/>
</dbReference>
<dbReference type="Reactome" id="R-DDI-5693565">
    <property type="pathway name" value="Recruitment and ATM-mediated phosphorylation of repair and signaling proteins at DNA double strand breaks"/>
</dbReference>
<dbReference type="Reactome" id="R-DDI-68616">
    <property type="pathway name" value="Assembly of the ORC complex at the origin of replication"/>
</dbReference>
<dbReference type="Reactome" id="R-DDI-73772">
    <property type="pathway name" value="RNA Polymerase I Promoter Escape"/>
</dbReference>
<dbReference type="Reactome" id="R-DDI-9843940">
    <property type="pathway name" value="Regulation of endogenous retroelements by KRAB-ZFP proteins"/>
</dbReference>
<dbReference type="PRO" id="PR:Q54HW2"/>
<dbReference type="Proteomes" id="UP000002195">
    <property type="component" value="Chromosome 5"/>
</dbReference>
<dbReference type="GO" id="GO:0000786">
    <property type="term" value="C:nucleosome"/>
    <property type="evidence" value="ECO:0000318"/>
    <property type="project" value="GO_Central"/>
</dbReference>
<dbReference type="GO" id="GO:0005634">
    <property type="term" value="C:nucleus"/>
    <property type="evidence" value="ECO:0000318"/>
    <property type="project" value="GO_Central"/>
</dbReference>
<dbReference type="GO" id="GO:0003677">
    <property type="term" value="F:DNA binding"/>
    <property type="evidence" value="ECO:0007669"/>
    <property type="project" value="InterPro"/>
</dbReference>
<dbReference type="GO" id="GO:0046982">
    <property type="term" value="F:protein heterodimerization activity"/>
    <property type="evidence" value="ECO:0007669"/>
    <property type="project" value="InterPro"/>
</dbReference>
<dbReference type="GO" id="GO:0030527">
    <property type="term" value="F:structural constituent of chromatin"/>
    <property type="evidence" value="ECO:0000318"/>
    <property type="project" value="GO_Central"/>
</dbReference>
<dbReference type="GO" id="GO:0031507">
    <property type="term" value="P:heterochromatin formation"/>
    <property type="evidence" value="ECO:0000318"/>
    <property type="project" value="GO_Central"/>
</dbReference>
<dbReference type="CDD" id="cd00074">
    <property type="entry name" value="HFD_H2A"/>
    <property type="match status" value="1"/>
</dbReference>
<dbReference type="FunFam" id="1.10.20.10:FF:000093">
    <property type="entry name" value="Histone H2A"/>
    <property type="match status" value="1"/>
</dbReference>
<dbReference type="Gene3D" id="1.10.20.10">
    <property type="entry name" value="Histone, subunit A"/>
    <property type="match status" value="1"/>
</dbReference>
<dbReference type="InterPro" id="IPR009072">
    <property type="entry name" value="Histone-fold"/>
</dbReference>
<dbReference type="InterPro" id="IPR002119">
    <property type="entry name" value="Histone_H2A"/>
</dbReference>
<dbReference type="InterPro" id="IPR007125">
    <property type="entry name" value="Histone_H2A/H2B/H3"/>
</dbReference>
<dbReference type="InterPro" id="IPR032454">
    <property type="entry name" value="Histone_H2A_C"/>
</dbReference>
<dbReference type="PANTHER" id="PTHR23430">
    <property type="entry name" value="HISTONE H2A"/>
    <property type="match status" value="1"/>
</dbReference>
<dbReference type="Pfam" id="PF00125">
    <property type="entry name" value="Histone"/>
    <property type="match status" value="1"/>
</dbReference>
<dbReference type="Pfam" id="PF16211">
    <property type="entry name" value="Histone_H2A_C"/>
    <property type="match status" value="1"/>
</dbReference>
<dbReference type="PRINTS" id="PR00620">
    <property type="entry name" value="HISTONEH2A"/>
</dbReference>
<dbReference type="SMART" id="SM00414">
    <property type="entry name" value="H2A"/>
    <property type="match status" value="1"/>
</dbReference>
<dbReference type="SUPFAM" id="SSF47113">
    <property type="entry name" value="Histone-fold"/>
    <property type="match status" value="1"/>
</dbReference>
<comment type="similarity">
    <text evidence="2">Belongs to the histone H2A family.</text>
</comment>
<comment type="caution">
    <text evidence="2">In contrast to other members of the histone H2A family, this protein is much longer and has a highly divergent N-terminus. It is therefore unclear whether it is a real histone.</text>
</comment>
<sequence length="260" mass="29478">MVKGKSKKVVTSTIQEENVSKEPLAPIVPIVPDILRNEEELVFIEIEKRDKNEIVNVPITQTNPVVQTNNKTNNKNNINNNNNNNNNNNNNNINNNNKNNKVKKTTTTTKKNNEKSNEKQKSVKFANKINESRSARADLTFPVSRIEKMIREGRFTKRCSSDAPVFLAAVLEYLTLEILELSITYANQKNKTRITPQHIHLSICCDAELNDLLKNVTIANGGVPKFIHPILLDTPKKKGHQQNMNENDISKEKDIKSSKN</sequence>
<gene>
    <name type="primary">H2Av1</name>
    <name type="ORF">DDB_G0289187</name>
</gene>
<protein>
    <recommendedName>
        <fullName>Histone H2A.v1</fullName>
    </recommendedName>
</protein>
<keyword id="KW-1185">Reference proteome</keyword>
<organism>
    <name type="scientific">Dictyostelium discoideum</name>
    <name type="common">Social amoeba</name>
    <dbReference type="NCBI Taxonomy" id="44689"/>
    <lineage>
        <taxon>Eukaryota</taxon>
        <taxon>Amoebozoa</taxon>
        <taxon>Evosea</taxon>
        <taxon>Eumycetozoa</taxon>
        <taxon>Dictyostelia</taxon>
        <taxon>Dictyosteliales</taxon>
        <taxon>Dictyosteliaceae</taxon>
        <taxon>Dictyostelium</taxon>
    </lineage>
</organism>
<feature type="chain" id="PRO_0000389155" description="Histone H2A.v1">
    <location>
        <begin position="1"/>
        <end position="260"/>
    </location>
</feature>
<feature type="region of interest" description="Disordered" evidence="1">
    <location>
        <begin position="65"/>
        <end position="122"/>
    </location>
</feature>
<feature type="region of interest" description="Disordered" evidence="1">
    <location>
        <begin position="236"/>
        <end position="260"/>
    </location>
</feature>
<feature type="compositionally biased region" description="Low complexity" evidence="1">
    <location>
        <begin position="67"/>
        <end position="110"/>
    </location>
</feature>
<feature type="compositionally biased region" description="Basic and acidic residues" evidence="1">
    <location>
        <begin position="111"/>
        <end position="121"/>
    </location>
</feature>
<feature type="compositionally biased region" description="Basic and acidic residues" evidence="1">
    <location>
        <begin position="248"/>
        <end position="260"/>
    </location>
</feature>
<proteinExistence type="inferred from homology"/>
<accession>Q54HW2</accession>
<evidence type="ECO:0000256" key="1">
    <source>
        <dbReference type="SAM" id="MobiDB-lite"/>
    </source>
</evidence>
<evidence type="ECO:0000305" key="2"/>